<name>VEA_CHAGB</name>
<protein>
    <recommendedName>
        <fullName evidence="5">Developmental and secondary metabolism regulator veA</fullName>
    </recommendedName>
    <alternativeName>
        <fullName evidence="5">Velvet complex subunit A</fullName>
    </alternativeName>
</protein>
<gene>
    <name evidence="5" type="primary">veA</name>
    <name type="ORF">CHGG_10370</name>
</gene>
<proteinExistence type="evidence at transcript level"/>
<dbReference type="EMBL" id="CH408035">
    <property type="protein sequence ID" value="EAQ83966.1"/>
    <property type="molecule type" value="Genomic_DNA"/>
</dbReference>
<dbReference type="RefSeq" id="XP_001228297.1">
    <property type="nucleotide sequence ID" value="XM_001228296.1"/>
</dbReference>
<dbReference type="SMR" id="Q2GNT4"/>
<dbReference type="STRING" id="306901.Q2GNT4"/>
<dbReference type="GeneID" id="4396351"/>
<dbReference type="VEuPathDB" id="FungiDB:CHGG_10370"/>
<dbReference type="eggNOG" id="ENOG502QVY9">
    <property type="taxonomic scope" value="Eukaryota"/>
</dbReference>
<dbReference type="HOGENOM" id="CLU_022491_2_0_1"/>
<dbReference type="InParanoid" id="Q2GNT4"/>
<dbReference type="OMA" id="IFRPSPM"/>
<dbReference type="OrthoDB" id="5384689at2759"/>
<dbReference type="Proteomes" id="UP000001056">
    <property type="component" value="Unassembled WGS sequence"/>
</dbReference>
<dbReference type="GO" id="GO:0005737">
    <property type="term" value="C:cytoplasm"/>
    <property type="evidence" value="ECO:0007669"/>
    <property type="project" value="UniProtKB-SubCell"/>
</dbReference>
<dbReference type="GO" id="GO:0005634">
    <property type="term" value="C:nucleus"/>
    <property type="evidence" value="ECO:0007669"/>
    <property type="project" value="UniProtKB-SubCell"/>
</dbReference>
<dbReference type="GO" id="GO:0030435">
    <property type="term" value="P:sporulation resulting in formation of a cellular spore"/>
    <property type="evidence" value="ECO:0007669"/>
    <property type="project" value="UniProtKB-KW"/>
</dbReference>
<dbReference type="FunFam" id="2.60.40.3960:FF:000001">
    <property type="entry name" value="Sexual development activator VeA"/>
    <property type="match status" value="1"/>
</dbReference>
<dbReference type="Gene3D" id="2.60.40.3960">
    <property type="entry name" value="Velvet domain"/>
    <property type="match status" value="1"/>
</dbReference>
<dbReference type="InterPro" id="IPR021740">
    <property type="entry name" value="Velvet"/>
</dbReference>
<dbReference type="InterPro" id="IPR037525">
    <property type="entry name" value="Velvet_dom"/>
</dbReference>
<dbReference type="InterPro" id="IPR038491">
    <property type="entry name" value="Velvet_dom_sf"/>
</dbReference>
<dbReference type="PANTHER" id="PTHR33572:SF14">
    <property type="entry name" value="DEVELOPMENTAL AND SECONDARY METABOLISM REGULATOR VEA"/>
    <property type="match status" value="1"/>
</dbReference>
<dbReference type="PANTHER" id="PTHR33572">
    <property type="entry name" value="SPORE DEVELOPMENT REGULATOR VOSA"/>
    <property type="match status" value="1"/>
</dbReference>
<dbReference type="Pfam" id="PF11754">
    <property type="entry name" value="Velvet"/>
    <property type="match status" value="2"/>
</dbReference>
<dbReference type="PROSITE" id="PS51821">
    <property type="entry name" value="VELVET"/>
    <property type="match status" value="1"/>
</dbReference>
<comment type="function">
    <text evidence="1 4">Component of the velvet transcription factor complex that controls sexual/asexual developmental ratio in response to light, promoting sexual development in the darkness while stimulating asexual sporulation under illumination (By similarity). The velvet complex acts as a global regulator for secondary metabolite gene expression (By similarity). Positively regulates chaetoglobosin A biosynthesis by controlling the expression of core genes of the chaetoglobosin A biosynthetic gene cluster and other relevant regulators in a light-dependent manner (PubMed:35949485). VeA directly regulates transcription factors brlA, laeA, and the chaetoglobosin A cluster-specific transcription regulator cheR (PubMed:35949485). Also directly regulates the expression of one of the chaetoglobosin A cluster cytochrome P450 monooxygenases (cheE or cheG), but only indirectly regulates the expression of the PKS-NRPS hybrid cheA (PubMed:35949485). Moreover, VeA has a significant effect on the asexual spores production, irrespective of light or dark condition (PubMed:35949485).</text>
</comment>
<comment type="subunit">
    <text evidence="1">Component of the heterotrimeric velvet complex composed of laeA, veA and velB; VeA acting as a bridging protein between laeA and velB.</text>
</comment>
<comment type="subcellular location">
    <subcellularLocation>
        <location evidence="1">Nucleus</location>
    </subcellularLocation>
    <subcellularLocation>
        <location evidence="1">Cytoplasm</location>
    </subcellularLocation>
    <text evidence="1">Enriched in the nucleus in the dark.</text>
</comment>
<comment type="induction">
    <text evidence="4">Expression under light condition is higher than that under dark condition (PubMed:35949485). Expressed almost constitutively at an increased level throughout the asexual and sexual developmental processes (PubMed:35949485).</text>
</comment>
<comment type="domain">
    <text evidence="1">The C-terminal PEST domain is a region rich in proline, glutamic acid, serine and threonine residues that is required for the light-dependent regulation of development and secondary metabolism.</text>
</comment>
<comment type="disruption phenotype">
    <text evidence="4">Decreases the production of chaetoglobosin A.</text>
</comment>
<comment type="similarity">
    <text evidence="6">Belongs to the velvet family. VeA subfamily.</text>
</comment>
<reference key="1">
    <citation type="journal article" date="2015" name="Genome Announc.">
        <title>Draft genome sequence of the cellulolytic fungus Chaetomium globosum.</title>
        <authorList>
            <person name="Cuomo C.A."/>
            <person name="Untereiner W.A."/>
            <person name="Ma L.-J."/>
            <person name="Grabherr M."/>
            <person name="Birren B.W."/>
        </authorList>
    </citation>
    <scope>NUCLEOTIDE SEQUENCE [LARGE SCALE GENOMIC DNA]</scope>
    <source>
        <strain>ATCC 6205 / CBS 148.51 / DSM 1962 / NBRC 6347 / NRRL 1970</strain>
    </source>
</reference>
<reference key="2">
    <citation type="journal article" date="2022" name="Synth. Syst. Biotechnol.">
        <title>CgVeA, a light signaling responsive regulator, is involved in regulation of chaetoglobosin A biosynthesis and conidia development in Chaetomium globosum.</title>
        <authorList>
            <person name="Wang Z."/>
            <person name="Zhao S."/>
            <person name="Zhang K."/>
            <person name="Lin C."/>
            <person name="Ru X."/>
            <person name="Yang Q."/>
        </authorList>
    </citation>
    <scope>FUNCTION</scope>
    <scope>DISRUPTION PHENOTYPE</scope>
    <scope>INDUCTION</scope>
</reference>
<keyword id="KW-0963">Cytoplasm</keyword>
<keyword id="KW-0539">Nucleus</keyword>
<keyword id="KW-1185">Reference proteome</keyword>
<keyword id="KW-0749">Sporulation</keyword>
<keyword id="KW-0804">Transcription</keyword>
<keyword id="KW-0805">Transcription regulation</keyword>
<sequence>MGAPILASAAHAVPALETGGHAMDASITSRETKGGRRLWYRMRVIQQPERARACGSGPKSSADRRPVDPPPVVELRIYEGQTWDQAQEKDITFVYNANFFLFATLEHARIMAHARGSASSANTPPVLTGMPVSGMAYLDRPEEAGYFLFPDLSVRHEGRYKLTFNLYEETKEDKDKDKERDVESQPPLTGLSPATGGSFDFRMEVKSQDFIVYSAKKFPGLAESTALSRVVAEQGCRVRIRRDVRMRRRDGKGAGDYDNGEEEYNRRRRTATPDNRNNDFAARARSMSGSTERTPYSADPQRRPSMADYPSQYAQNPPAGGHLQFLGGNASSQYPAAPPQPFAQPPSVPASPVYPPTQAAPYQMQTSYPPPPPPPAPKRERTPSQSGYAPINPAPRRESIHHDYRPSGPIQLPPLPPPPYYPPTPQQSHMPPPQPPQVLPPLQIDSNSKSNNRLPMPSPTALANSAPRPLASLAPLAPLMQSTSSSAGKGPVHPATLPPPAVYAGAKRAHDESFWSEPEHGRYQNGTRDKGRSEDIITDPTSMPFRRADGTEADGIRLRY</sequence>
<organism>
    <name type="scientific">Chaetomium globosum (strain ATCC 6205 / CBS 148.51 / DSM 1962 / NBRC 6347 / NRRL 1970)</name>
    <name type="common">Soil fungus</name>
    <dbReference type="NCBI Taxonomy" id="306901"/>
    <lineage>
        <taxon>Eukaryota</taxon>
        <taxon>Fungi</taxon>
        <taxon>Dikarya</taxon>
        <taxon>Ascomycota</taxon>
        <taxon>Pezizomycotina</taxon>
        <taxon>Sordariomycetes</taxon>
        <taxon>Sordariomycetidae</taxon>
        <taxon>Sordariales</taxon>
        <taxon>Chaetomiaceae</taxon>
        <taxon>Chaetomium</taxon>
    </lineage>
</organism>
<feature type="chain" id="PRO_0000457171" description="Developmental and secondary metabolism regulator veA">
    <location>
        <begin position="1"/>
        <end position="560"/>
    </location>
</feature>
<feature type="domain" description="Velvet" evidence="2">
    <location>
        <begin position="35"/>
        <end position="241"/>
    </location>
</feature>
<feature type="region of interest" description="Disordered" evidence="3">
    <location>
        <begin position="49"/>
        <end position="70"/>
    </location>
</feature>
<feature type="region of interest" description="Disordered" evidence="3">
    <location>
        <begin position="171"/>
        <end position="197"/>
    </location>
</feature>
<feature type="region of interest" description="Disordered" evidence="3">
    <location>
        <begin position="250"/>
        <end position="560"/>
    </location>
</feature>
<feature type="region of interest" description="PEST" evidence="1">
    <location>
        <begin position="455"/>
        <end position="496"/>
    </location>
</feature>
<feature type="short sequence motif" description="Nuclear localization signal" evidence="1">
    <location>
        <begin position="49"/>
        <end position="54"/>
    </location>
</feature>
<feature type="compositionally biased region" description="Basic and acidic residues" evidence="3">
    <location>
        <begin position="171"/>
        <end position="183"/>
    </location>
</feature>
<feature type="compositionally biased region" description="Pro residues" evidence="3">
    <location>
        <begin position="336"/>
        <end position="355"/>
    </location>
</feature>
<feature type="compositionally biased region" description="Basic and acidic residues" evidence="3">
    <location>
        <begin position="395"/>
        <end position="405"/>
    </location>
</feature>
<feature type="compositionally biased region" description="Pro residues" evidence="3">
    <location>
        <begin position="411"/>
        <end position="439"/>
    </location>
</feature>
<feature type="compositionally biased region" description="Polar residues" evidence="3">
    <location>
        <begin position="444"/>
        <end position="453"/>
    </location>
</feature>
<feature type="compositionally biased region" description="Low complexity" evidence="3">
    <location>
        <begin position="461"/>
        <end position="479"/>
    </location>
</feature>
<feature type="compositionally biased region" description="Basic and acidic residues" evidence="3">
    <location>
        <begin position="508"/>
        <end position="535"/>
    </location>
</feature>
<feature type="compositionally biased region" description="Basic and acidic residues" evidence="3">
    <location>
        <begin position="546"/>
        <end position="560"/>
    </location>
</feature>
<accession>Q2GNT4</accession>
<evidence type="ECO:0000250" key="1">
    <source>
        <dbReference type="UniProtKB" id="C8VTV4"/>
    </source>
</evidence>
<evidence type="ECO:0000255" key="2">
    <source>
        <dbReference type="PROSITE-ProRule" id="PRU01165"/>
    </source>
</evidence>
<evidence type="ECO:0000256" key="3">
    <source>
        <dbReference type="SAM" id="MobiDB-lite"/>
    </source>
</evidence>
<evidence type="ECO:0000269" key="4">
    <source>
    </source>
</evidence>
<evidence type="ECO:0000303" key="5">
    <source>
    </source>
</evidence>
<evidence type="ECO:0000305" key="6"/>